<gene>
    <name evidence="1" type="primary">hisG</name>
    <name type="ordered locus">KPK_1690</name>
</gene>
<evidence type="ECO:0000255" key="1">
    <source>
        <dbReference type="HAMAP-Rule" id="MF_00079"/>
    </source>
</evidence>
<comment type="function">
    <text evidence="1">Catalyzes the condensation of ATP and 5-phosphoribose 1-diphosphate to form N'-(5'-phosphoribosyl)-ATP (PR-ATP). Has a crucial role in the pathway because the rate of histidine biosynthesis seems to be controlled primarily by regulation of HisG enzymatic activity.</text>
</comment>
<comment type="catalytic activity">
    <reaction evidence="1">
        <text>1-(5-phospho-beta-D-ribosyl)-ATP + diphosphate = 5-phospho-alpha-D-ribose 1-diphosphate + ATP</text>
        <dbReference type="Rhea" id="RHEA:18473"/>
        <dbReference type="ChEBI" id="CHEBI:30616"/>
        <dbReference type="ChEBI" id="CHEBI:33019"/>
        <dbReference type="ChEBI" id="CHEBI:58017"/>
        <dbReference type="ChEBI" id="CHEBI:73183"/>
        <dbReference type="EC" id="2.4.2.17"/>
    </reaction>
</comment>
<comment type="cofactor">
    <cofactor evidence="1">
        <name>Mg(2+)</name>
        <dbReference type="ChEBI" id="CHEBI:18420"/>
    </cofactor>
</comment>
<comment type="activity regulation">
    <text evidence="1">Feedback inhibited by histidine.</text>
</comment>
<comment type="pathway">
    <text evidence="1">Amino-acid biosynthesis; L-histidine biosynthesis; L-histidine from 5-phospho-alpha-D-ribose 1-diphosphate: step 1/9.</text>
</comment>
<comment type="subunit">
    <text evidence="1">Equilibrium between an active dimeric form, an inactive hexameric form and higher aggregates. Interconversion between the various forms is largely reversible and is influenced by the natural substrates and inhibitors of the enzyme.</text>
</comment>
<comment type="subcellular location">
    <subcellularLocation>
        <location evidence="1">Cytoplasm</location>
    </subcellularLocation>
</comment>
<comment type="similarity">
    <text evidence="1">Belongs to the ATP phosphoribosyltransferase family. Long subfamily.</text>
</comment>
<dbReference type="EC" id="2.4.2.17" evidence="1"/>
<dbReference type="EMBL" id="CP000964">
    <property type="protein sequence ID" value="ACI07752.1"/>
    <property type="molecule type" value="Genomic_DNA"/>
</dbReference>
<dbReference type="SMR" id="B5XPE8"/>
<dbReference type="KEGG" id="kpe:KPK_1690"/>
<dbReference type="HOGENOM" id="CLU_038115_1_0_6"/>
<dbReference type="UniPathway" id="UPA00031">
    <property type="reaction ID" value="UER00006"/>
</dbReference>
<dbReference type="Proteomes" id="UP000001734">
    <property type="component" value="Chromosome"/>
</dbReference>
<dbReference type="GO" id="GO:0005737">
    <property type="term" value="C:cytoplasm"/>
    <property type="evidence" value="ECO:0007669"/>
    <property type="project" value="UniProtKB-SubCell"/>
</dbReference>
<dbReference type="GO" id="GO:0005524">
    <property type="term" value="F:ATP binding"/>
    <property type="evidence" value="ECO:0007669"/>
    <property type="project" value="UniProtKB-KW"/>
</dbReference>
<dbReference type="GO" id="GO:0003879">
    <property type="term" value="F:ATP phosphoribosyltransferase activity"/>
    <property type="evidence" value="ECO:0007669"/>
    <property type="project" value="UniProtKB-UniRule"/>
</dbReference>
<dbReference type="GO" id="GO:0000287">
    <property type="term" value="F:magnesium ion binding"/>
    <property type="evidence" value="ECO:0007669"/>
    <property type="project" value="UniProtKB-UniRule"/>
</dbReference>
<dbReference type="GO" id="GO:0000105">
    <property type="term" value="P:L-histidine biosynthetic process"/>
    <property type="evidence" value="ECO:0007669"/>
    <property type="project" value="UniProtKB-UniRule"/>
</dbReference>
<dbReference type="CDD" id="cd13592">
    <property type="entry name" value="PBP2_HisGL2"/>
    <property type="match status" value="1"/>
</dbReference>
<dbReference type="FunFam" id="3.30.70.120:FF:000002">
    <property type="entry name" value="ATP phosphoribosyltransferase"/>
    <property type="match status" value="1"/>
</dbReference>
<dbReference type="FunFam" id="3.40.190.10:FF:000008">
    <property type="entry name" value="ATP phosphoribosyltransferase"/>
    <property type="match status" value="1"/>
</dbReference>
<dbReference type="Gene3D" id="3.30.70.120">
    <property type="match status" value="1"/>
</dbReference>
<dbReference type="Gene3D" id="3.40.190.10">
    <property type="entry name" value="Periplasmic binding protein-like II"/>
    <property type="match status" value="2"/>
</dbReference>
<dbReference type="HAMAP" id="MF_00079">
    <property type="entry name" value="HisG_Long"/>
    <property type="match status" value="1"/>
</dbReference>
<dbReference type="InterPro" id="IPR020621">
    <property type="entry name" value="ATP-PRT_HisG_long"/>
</dbReference>
<dbReference type="InterPro" id="IPR013820">
    <property type="entry name" value="ATP_PRibTrfase_cat"/>
</dbReference>
<dbReference type="InterPro" id="IPR018198">
    <property type="entry name" value="ATP_PRibTrfase_CS"/>
</dbReference>
<dbReference type="InterPro" id="IPR001348">
    <property type="entry name" value="ATP_PRibTrfase_HisG"/>
</dbReference>
<dbReference type="InterPro" id="IPR013115">
    <property type="entry name" value="HisG_C"/>
</dbReference>
<dbReference type="InterPro" id="IPR011322">
    <property type="entry name" value="N-reg_PII-like_a/b"/>
</dbReference>
<dbReference type="InterPro" id="IPR015867">
    <property type="entry name" value="N-reg_PII/ATP_PRibTrfase_C"/>
</dbReference>
<dbReference type="NCBIfam" id="TIGR00070">
    <property type="entry name" value="hisG"/>
    <property type="match status" value="1"/>
</dbReference>
<dbReference type="NCBIfam" id="TIGR03455">
    <property type="entry name" value="HisG_C-term"/>
    <property type="match status" value="1"/>
</dbReference>
<dbReference type="PANTHER" id="PTHR21403:SF8">
    <property type="entry name" value="ATP PHOSPHORIBOSYLTRANSFERASE"/>
    <property type="match status" value="1"/>
</dbReference>
<dbReference type="PANTHER" id="PTHR21403">
    <property type="entry name" value="ATP PHOSPHORIBOSYLTRANSFERASE ATP-PRTASE"/>
    <property type="match status" value="1"/>
</dbReference>
<dbReference type="Pfam" id="PF01634">
    <property type="entry name" value="HisG"/>
    <property type="match status" value="1"/>
</dbReference>
<dbReference type="Pfam" id="PF08029">
    <property type="entry name" value="HisG_C"/>
    <property type="match status" value="1"/>
</dbReference>
<dbReference type="SUPFAM" id="SSF54913">
    <property type="entry name" value="GlnB-like"/>
    <property type="match status" value="1"/>
</dbReference>
<dbReference type="SUPFAM" id="SSF53850">
    <property type="entry name" value="Periplasmic binding protein-like II"/>
    <property type="match status" value="1"/>
</dbReference>
<dbReference type="PROSITE" id="PS01316">
    <property type="entry name" value="ATP_P_PHORIBOSYLTR"/>
    <property type="match status" value="1"/>
</dbReference>
<keyword id="KW-0028">Amino-acid biosynthesis</keyword>
<keyword id="KW-0067">ATP-binding</keyword>
<keyword id="KW-0963">Cytoplasm</keyword>
<keyword id="KW-0328">Glycosyltransferase</keyword>
<keyword id="KW-0368">Histidine biosynthesis</keyword>
<keyword id="KW-0460">Magnesium</keyword>
<keyword id="KW-0479">Metal-binding</keyword>
<keyword id="KW-0547">Nucleotide-binding</keyword>
<keyword id="KW-0808">Transferase</keyword>
<proteinExistence type="inferred from homology"/>
<reference key="1">
    <citation type="journal article" date="2008" name="PLoS Genet.">
        <title>Complete genome sequence of the N2-fixing broad host range endophyte Klebsiella pneumoniae 342 and virulence predictions verified in mice.</title>
        <authorList>
            <person name="Fouts D.E."/>
            <person name="Tyler H.L."/>
            <person name="DeBoy R.T."/>
            <person name="Daugherty S."/>
            <person name="Ren Q."/>
            <person name="Badger J.H."/>
            <person name="Durkin A.S."/>
            <person name="Huot H."/>
            <person name="Shrivastava S."/>
            <person name="Kothari S."/>
            <person name="Dodson R.J."/>
            <person name="Mohamoud Y."/>
            <person name="Khouri H."/>
            <person name="Roesch L.F.W."/>
            <person name="Krogfelt K.A."/>
            <person name="Struve C."/>
            <person name="Triplett E.W."/>
            <person name="Methe B.A."/>
        </authorList>
    </citation>
    <scope>NUCLEOTIDE SEQUENCE [LARGE SCALE GENOMIC DNA]</scope>
    <source>
        <strain>342</strain>
    </source>
</reference>
<organism>
    <name type="scientific">Klebsiella pneumoniae (strain 342)</name>
    <dbReference type="NCBI Taxonomy" id="507522"/>
    <lineage>
        <taxon>Bacteria</taxon>
        <taxon>Pseudomonadati</taxon>
        <taxon>Pseudomonadota</taxon>
        <taxon>Gammaproteobacteria</taxon>
        <taxon>Enterobacterales</taxon>
        <taxon>Enterobacteriaceae</taxon>
        <taxon>Klebsiella/Raoultella group</taxon>
        <taxon>Klebsiella</taxon>
        <taxon>Klebsiella pneumoniae complex</taxon>
    </lineage>
</organism>
<protein>
    <recommendedName>
        <fullName evidence="1">ATP phosphoribosyltransferase</fullName>
        <shortName evidence="1">ATP-PRT</shortName>
        <shortName evidence="1">ATP-PRTase</shortName>
        <ecNumber evidence="1">2.4.2.17</ecNumber>
    </recommendedName>
</protein>
<accession>B5XPE8</accession>
<name>HIS1_KLEP3</name>
<feature type="chain" id="PRO_1000092735" description="ATP phosphoribosyltransferase">
    <location>
        <begin position="1"/>
        <end position="299"/>
    </location>
</feature>
<sequence>MLDNTRLRIAIQKSGRLSEDSRELLSRCGIKVNLHTQRLIALAENMPIDILRVRDDDIPGLVMDGVVDLGIIGENVLEEELLSRRAQGEDPRYFTLRRLDFGGCRLSLATPVDEAWNGPAALDGKRIATSYPHLLKRYLDQKGISFKSCLLNGSVEVAPRAGLADAICDLVSTGATLEANGLREVEVIYRSKACLIQRDGEMADAKQQLIDRLLTRIQGVIQARESKYIMMHAPTERLEEVVALLPGAERPTILPLAGDKQRVAMHMVSSETLFWETMEKLKALGASSILVLPIEKMME</sequence>